<protein>
    <recommendedName>
        <fullName>Staphostatin B</fullName>
    </recommendedName>
    <alternativeName>
        <fullName>Staphylococcal cysteine protease B inhibitor</fullName>
    </alternativeName>
</protein>
<evidence type="ECO:0000250" key="1"/>
<evidence type="ECO:0000305" key="2"/>
<comment type="function">
    <text evidence="1">Specifically inhibits the cysteine protease staphopain B (SspB) by blocking the active site of the enzyme. Probably required to protect cytoplasmic proteins from being degraded by prematurely activated/folded prostaphopain B. Also involved in growth capacity, viability and bacterial morphology (By similarity).</text>
</comment>
<comment type="subunit">
    <text evidence="1">Forms a stable non-covalent complex with prematurely activated/folded SspB.</text>
</comment>
<comment type="subcellular location">
    <subcellularLocation>
        <location evidence="1">Cytoplasm</location>
    </subcellularLocation>
</comment>
<comment type="miscellaneous">
    <text evidence="1">Inactivated by staphylococcal serine protease (SspA).</text>
</comment>
<comment type="similarity">
    <text evidence="2">Belongs to the protease inhibitor I57 (SspC) family.</text>
</comment>
<gene>
    <name type="primary">sspC</name>
    <name type="ordered locus">SA0899</name>
</gene>
<keyword id="KW-0963">Cytoplasm</keyword>
<keyword id="KW-0646">Protease inhibitor</keyword>
<keyword id="KW-0789">Thiol protease inhibitor</keyword>
<keyword id="KW-0843">Virulence</keyword>
<sequence length="109" mass="12869">MYQLQFINLVYDTTKLTHLEQTNINLFIGNWSNHQLQKSICIRHGDDTSHNQYHILFIDTAHQRIKFSSIDNEEITYILDYDDTQHILMQTSSKQGIGTSRPIVYERLV</sequence>
<organism>
    <name type="scientific">Staphylococcus aureus (strain N315)</name>
    <dbReference type="NCBI Taxonomy" id="158879"/>
    <lineage>
        <taxon>Bacteria</taxon>
        <taxon>Bacillati</taxon>
        <taxon>Bacillota</taxon>
        <taxon>Bacilli</taxon>
        <taxon>Bacillales</taxon>
        <taxon>Staphylococcaceae</taxon>
        <taxon>Staphylococcus</taxon>
    </lineage>
</organism>
<dbReference type="EMBL" id="BA000018">
    <property type="protein sequence ID" value="BAB42144.1"/>
    <property type="molecule type" value="Genomic_DNA"/>
</dbReference>
<dbReference type="PIR" id="E89873">
    <property type="entry name" value="E89873"/>
</dbReference>
<dbReference type="RefSeq" id="WP_000284458.1">
    <property type="nucleotide sequence ID" value="NC_002745.2"/>
</dbReference>
<dbReference type="SMR" id="Q7A6A8"/>
<dbReference type="MEROPS" id="I57.001"/>
<dbReference type="EnsemblBacteria" id="BAB42144">
    <property type="protein sequence ID" value="BAB42144"/>
    <property type="gene ID" value="BAB42144"/>
</dbReference>
<dbReference type="KEGG" id="sau:SA0899"/>
<dbReference type="HOGENOM" id="CLU_174854_0_0_9"/>
<dbReference type="GO" id="GO:0005737">
    <property type="term" value="C:cytoplasm"/>
    <property type="evidence" value="ECO:0007669"/>
    <property type="project" value="UniProtKB-SubCell"/>
</dbReference>
<dbReference type="GO" id="GO:0004869">
    <property type="term" value="F:cysteine-type endopeptidase inhibitor activity"/>
    <property type="evidence" value="ECO:0007669"/>
    <property type="project" value="UniProtKB-KW"/>
</dbReference>
<dbReference type="Gene3D" id="2.40.310.10">
    <property type="entry name" value="beta-Barrel protease inhibitors"/>
    <property type="match status" value="1"/>
</dbReference>
<dbReference type="InterPro" id="IPR016085">
    <property type="entry name" value="Protease_inh_b-brl_dom"/>
</dbReference>
<dbReference type="InterPro" id="IPR037296">
    <property type="entry name" value="Staphostatin_A/B"/>
</dbReference>
<dbReference type="InterPro" id="IPR015113">
    <property type="entry name" value="Staphostatin_B"/>
</dbReference>
<dbReference type="Pfam" id="PF09023">
    <property type="entry name" value="Staphostatin_B"/>
    <property type="match status" value="1"/>
</dbReference>
<dbReference type="SUPFAM" id="SSF50882">
    <property type="entry name" value="beta-Barrel protease inhibitors"/>
    <property type="match status" value="1"/>
</dbReference>
<accession>Q7A6A8</accession>
<name>SSPC_STAAN</name>
<feature type="chain" id="PRO_0000220556" description="Staphostatin B">
    <location>
        <begin position="1"/>
        <end position="109"/>
    </location>
</feature>
<feature type="region of interest" description="Binds to staphopain B" evidence="1">
    <location>
        <begin position="97"/>
        <end position="101"/>
    </location>
</feature>
<reference key="1">
    <citation type="journal article" date="2001" name="Lancet">
        <title>Whole genome sequencing of meticillin-resistant Staphylococcus aureus.</title>
        <authorList>
            <person name="Kuroda M."/>
            <person name="Ohta T."/>
            <person name="Uchiyama I."/>
            <person name="Baba T."/>
            <person name="Yuzawa H."/>
            <person name="Kobayashi I."/>
            <person name="Cui L."/>
            <person name="Oguchi A."/>
            <person name="Aoki K."/>
            <person name="Nagai Y."/>
            <person name="Lian J.-Q."/>
            <person name="Ito T."/>
            <person name="Kanamori M."/>
            <person name="Matsumaru H."/>
            <person name="Maruyama A."/>
            <person name="Murakami H."/>
            <person name="Hosoyama A."/>
            <person name="Mizutani-Ui Y."/>
            <person name="Takahashi N.K."/>
            <person name="Sawano T."/>
            <person name="Inoue R."/>
            <person name="Kaito C."/>
            <person name="Sekimizu K."/>
            <person name="Hirakawa H."/>
            <person name="Kuhara S."/>
            <person name="Goto S."/>
            <person name="Yabuzaki J."/>
            <person name="Kanehisa M."/>
            <person name="Yamashita A."/>
            <person name="Oshima K."/>
            <person name="Furuya K."/>
            <person name="Yoshino C."/>
            <person name="Shiba T."/>
            <person name="Hattori M."/>
            <person name="Ogasawara N."/>
            <person name="Hayashi H."/>
            <person name="Hiramatsu K."/>
        </authorList>
    </citation>
    <scope>NUCLEOTIDE SEQUENCE [LARGE SCALE GENOMIC DNA]</scope>
    <source>
        <strain>N315</strain>
    </source>
</reference>
<proteinExistence type="inferred from homology"/>